<comment type="function">
    <text evidence="1">One of several proteins that assist in the late maturation steps of the functional core of the 30S ribosomal subunit. Associates with free 30S ribosomal subunits (but not with 30S subunits that are part of 70S ribosomes or polysomes). Required for efficient processing of 16S rRNA. May interact with the 5'-terminal helix region of 16S rRNA.</text>
</comment>
<comment type="subunit">
    <text evidence="1">Monomer. Binds 30S ribosomal subunits, but not 50S ribosomal subunits or 70S ribosomes.</text>
</comment>
<comment type="subcellular location">
    <subcellularLocation>
        <location evidence="1">Cytoplasm</location>
    </subcellularLocation>
</comment>
<comment type="similarity">
    <text evidence="1">Belongs to the RbfA family.</text>
</comment>
<evidence type="ECO:0000255" key="1">
    <source>
        <dbReference type="HAMAP-Rule" id="MF_00003"/>
    </source>
</evidence>
<evidence type="ECO:0000256" key="2">
    <source>
        <dbReference type="SAM" id="MobiDB-lite"/>
    </source>
</evidence>
<protein>
    <recommendedName>
        <fullName evidence="1">Ribosome-binding factor A</fullName>
    </recommendedName>
</protein>
<proteinExistence type="inferred from homology"/>
<accession>Q6NGN3</accession>
<keyword id="KW-0963">Cytoplasm</keyword>
<keyword id="KW-1185">Reference proteome</keyword>
<keyword id="KW-0690">Ribosome biogenesis</keyword>
<feature type="chain" id="PRO_0000102652" description="Ribosome-binding factor A">
    <location>
        <begin position="1"/>
        <end position="147"/>
    </location>
</feature>
<feature type="region of interest" description="Disordered" evidence="2">
    <location>
        <begin position="126"/>
        <end position="147"/>
    </location>
</feature>
<feature type="compositionally biased region" description="Basic and acidic residues" evidence="2">
    <location>
        <begin position="137"/>
        <end position="147"/>
    </location>
</feature>
<organism>
    <name type="scientific">Corynebacterium diphtheriae (strain ATCC 700971 / NCTC 13129 / Biotype gravis)</name>
    <dbReference type="NCBI Taxonomy" id="257309"/>
    <lineage>
        <taxon>Bacteria</taxon>
        <taxon>Bacillati</taxon>
        <taxon>Actinomycetota</taxon>
        <taxon>Actinomycetes</taxon>
        <taxon>Mycobacteriales</taxon>
        <taxon>Corynebacteriaceae</taxon>
        <taxon>Corynebacterium</taxon>
    </lineage>
</organism>
<sequence length="147" mass="16499">MVDHARAARLAKRIQTIVATAIEREVKDRRLEYVTVTDTRVTGDLHDATVYYTVRGRTIDDQPDLKAAAEALQRARGQLRKIVGDQLSVRFTPTLSFELDTVPETSAHMEDLLARARARDLELAELKKNAQPAGDAHPYKDDDAMND</sequence>
<gene>
    <name evidence="1" type="primary">rbfA</name>
    <name type="ordered locus">DIP1476</name>
</gene>
<reference key="1">
    <citation type="journal article" date="2003" name="Nucleic Acids Res.">
        <title>The complete genome sequence and analysis of Corynebacterium diphtheriae NCTC13129.</title>
        <authorList>
            <person name="Cerdeno-Tarraga A.-M."/>
            <person name="Efstratiou A."/>
            <person name="Dover L.G."/>
            <person name="Holden M.T.G."/>
            <person name="Pallen M.J."/>
            <person name="Bentley S.D."/>
            <person name="Besra G.S."/>
            <person name="Churcher C.M."/>
            <person name="James K.D."/>
            <person name="De Zoysa A."/>
            <person name="Chillingworth T."/>
            <person name="Cronin A."/>
            <person name="Dowd L."/>
            <person name="Feltwell T."/>
            <person name="Hamlin N."/>
            <person name="Holroyd S."/>
            <person name="Jagels K."/>
            <person name="Moule S."/>
            <person name="Quail M.A."/>
            <person name="Rabbinowitsch E."/>
            <person name="Rutherford K.M."/>
            <person name="Thomson N.R."/>
            <person name="Unwin L."/>
            <person name="Whitehead S."/>
            <person name="Barrell B.G."/>
            <person name="Parkhill J."/>
        </authorList>
    </citation>
    <scope>NUCLEOTIDE SEQUENCE [LARGE SCALE GENOMIC DNA]</scope>
    <source>
        <strain>ATCC 700971 / NCTC 13129 / Biotype gravis</strain>
    </source>
</reference>
<dbReference type="EMBL" id="BX248358">
    <property type="protein sequence ID" value="CAE50004.1"/>
    <property type="molecule type" value="Genomic_DNA"/>
</dbReference>
<dbReference type="RefSeq" id="WP_010935093.1">
    <property type="nucleotide sequence ID" value="NC_002935.2"/>
</dbReference>
<dbReference type="SMR" id="Q6NGN3"/>
<dbReference type="STRING" id="257309.DIP1476"/>
<dbReference type="KEGG" id="cdi:DIP1476"/>
<dbReference type="HOGENOM" id="CLU_089475_0_0_11"/>
<dbReference type="Proteomes" id="UP000002198">
    <property type="component" value="Chromosome"/>
</dbReference>
<dbReference type="GO" id="GO:0005829">
    <property type="term" value="C:cytosol"/>
    <property type="evidence" value="ECO:0007669"/>
    <property type="project" value="TreeGrafter"/>
</dbReference>
<dbReference type="GO" id="GO:0043024">
    <property type="term" value="F:ribosomal small subunit binding"/>
    <property type="evidence" value="ECO:0007669"/>
    <property type="project" value="TreeGrafter"/>
</dbReference>
<dbReference type="GO" id="GO:0030490">
    <property type="term" value="P:maturation of SSU-rRNA"/>
    <property type="evidence" value="ECO:0007669"/>
    <property type="project" value="UniProtKB-UniRule"/>
</dbReference>
<dbReference type="Gene3D" id="3.30.300.20">
    <property type="match status" value="1"/>
</dbReference>
<dbReference type="HAMAP" id="MF_00003">
    <property type="entry name" value="RbfA"/>
    <property type="match status" value="1"/>
</dbReference>
<dbReference type="InterPro" id="IPR015946">
    <property type="entry name" value="KH_dom-like_a/b"/>
</dbReference>
<dbReference type="InterPro" id="IPR000238">
    <property type="entry name" value="RbfA"/>
</dbReference>
<dbReference type="InterPro" id="IPR023799">
    <property type="entry name" value="RbfA_dom_sf"/>
</dbReference>
<dbReference type="InterPro" id="IPR020053">
    <property type="entry name" value="Ribosome-bd_factorA_CS"/>
</dbReference>
<dbReference type="NCBIfam" id="TIGR00082">
    <property type="entry name" value="rbfA"/>
    <property type="match status" value="1"/>
</dbReference>
<dbReference type="PANTHER" id="PTHR33515">
    <property type="entry name" value="RIBOSOME-BINDING FACTOR A, CHLOROPLASTIC-RELATED"/>
    <property type="match status" value="1"/>
</dbReference>
<dbReference type="PANTHER" id="PTHR33515:SF1">
    <property type="entry name" value="RIBOSOME-BINDING FACTOR A, CHLOROPLASTIC-RELATED"/>
    <property type="match status" value="1"/>
</dbReference>
<dbReference type="Pfam" id="PF02033">
    <property type="entry name" value="RBFA"/>
    <property type="match status" value="1"/>
</dbReference>
<dbReference type="SUPFAM" id="SSF89919">
    <property type="entry name" value="Ribosome-binding factor A, RbfA"/>
    <property type="match status" value="1"/>
</dbReference>
<dbReference type="PROSITE" id="PS01319">
    <property type="entry name" value="RBFA"/>
    <property type="match status" value="1"/>
</dbReference>
<name>RBFA_CORDI</name>